<dbReference type="EMBL" id="AE000511">
    <property type="protein sequence ID" value="AAD08091.1"/>
    <property type="molecule type" value="Genomic_DNA"/>
</dbReference>
<dbReference type="PIR" id="F64650">
    <property type="entry name" value="F64650"/>
</dbReference>
<dbReference type="RefSeq" id="NP_207836.1">
    <property type="nucleotide sequence ID" value="NC_000915.1"/>
</dbReference>
<dbReference type="RefSeq" id="WP_000162267.1">
    <property type="nucleotide sequence ID" value="NC_018939.1"/>
</dbReference>
<dbReference type="SMR" id="O25687"/>
<dbReference type="DIP" id="DIP-3627N"/>
<dbReference type="FunCoup" id="O25687">
    <property type="interactions" value="234"/>
</dbReference>
<dbReference type="IntAct" id="O25687">
    <property type="interactions" value="13"/>
</dbReference>
<dbReference type="MINT" id="O25687"/>
<dbReference type="STRING" id="85962.HP_1046"/>
<dbReference type="PaxDb" id="85962-C694_05410"/>
<dbReference type="EnsemblBacteria" id="AAD08091">
    <property type="protein sequence ID" value="AAD08091"/>
    <property type="gene ID" value="HP_1046"/>
</dbReference>
<dbReference type="KEGG" id="heo:C694_05410"/>
<dbReference type="KEGG" id="hpy:HP_1046"/>
<dbReference type="PATRIC" id="fig|85962.47.peg.1125"/>
<dbReference type="eggNOG" id="COG0779">
    <property type="taxonomic scope" value="Bacteria"/>
</dbReference>
<dbReference type="InParanoid" id="O25687"/>
<dbReference type="OrthoDB" id="9805006at2"/>
<dbReference type="PhylomeDB" id="O25687"/>
<dbReference type="Proteomes" id="UP000000429">
    <property type="component" value="Chromosome"/>
</dbReference>
<dbReference type="GO" id="GO:0005829">
    <property type="term" value="C:cytosol"/>
    <property type="evidence" value="ECO:0000318"/>
    <property type="project" value="GO_Central"/>
</dbReference>
<dbReference type="GO" id="GO:0000028">
    <property type="term" value="P:ribosomal small subunit assembly"/>
    <property type="evidence" value="ECO:0000318"/>
    <property type="project" value="GO_Central"/>
</dbReference>
<dbReference type="GO" id="GO:0006412">
    <property type="term" value="P:translation"/>
    <property type="evidence" value="ECO:0000318"/>
    <property type="project" value="GO_Central"/>
</dbReference>
<dbReference type="CDD" id="cd01734">
    <property type="entry name" value="YlxS_C"/>
    <property type="match status" value="1"/>
</dbReference>
<dbReference type="FunFam" id="3.30.300.70:FF:000005">
    <property type="entry name" value="Ribosome maturation factor RimP"/>
    <property type="match status" value="1"/>
</dbReference>
<dbReference type="Gene3D" id="3.30.300.70">
    <property type="entry name" value="RimP-like superfamily, N-terminal"/>
    <property type="match status" value="1"/>
</dbReference>
<dbReference type="HAMAP" id="MF_01077">
    <property type="entry name" value="RimP"/>
    <property type="match status" value="1"/>
</dbReference>
<dbReference type="InterPro" id="IPR003728">
    <property type="entry name" value="Ribosome_maturation_RimP"/>
</dbReference>
<dbReference type="InterPro" id="IPR028998">
    <property type="entry name" value="RimP_C"/>
</dbReference>
<dbReference type="InterPro" id="IPR028989">
    <property type="entry name" value="RimP_N"/>
</dbReference>
<dbReference type="InterPro" id="IPR035956">
    <property type="entry name" value="RimP_N_sf"/>
</dbReference>
<dbReference type="PANTHER" id="PTHR33867">
    <property type="entry name" value="RIBOSOME MATURATION FACTOR RIMP"/>
    <property type="match status" value="1"/>
</dbReference>
<dbReference type="PANTHER" id="PTHR33867:SF1">
    <property type="entry name" value="RIBOSOME MATURATION FACTOR RIMP"/>
    <property type="match status" value="1"/>
</dbReference>
<dbReference type="Pfam" id="PF17384">
    <property type="entry name" value="DUF150_C"/>
    <property type="match status" value="1"/>
</dbReference>
<dbReference type="Pfam" id="PF02576">
    <property type="entry name" value="RimP_N"/>
    <property type="match status" value="1"/>
</dbReference>
<dbReference type="SUPFAM" id="SSF75420">
    <property type="entry name" value="YhbC-like, N-terminal domain"/>
    <property type="match status" value="1"/>
</dbReference>
<proteinExistence type="evidence at protein level"/>
<accession>O25687</accession>
<reference key="1">
    <citation type="journal article" date="1997" name="Nature">
        <title>The complete genome sequence of the gastric pathogen Helicobacter pylori.</title>
        <authorList>
            <person name="Tomb J.-F."/>
            <person name="White O."/>
            <person name="Kerlavage A.R."/>
            <person name="Clayton R.A."/>
            <person name="Sutton G.G."/>
            <person name="Fleischmann R.D."/>
            <person name="Ketchum K.A."/>
            <person name="Klenk H.-P."/>
            <person name="Gill S.R."/>
            <person name="Dougherty B.A."/>
            <person name="Nelson K.E."/>
            <person name="Quackenbush J."/>
            <person name="Zhou L."/>
            <person name="Kirkness E.F."/>
            <person name="Peterson S.N."/>
            <person name="Loftus B.J."/>
            <person name="Richardson D.L."/>
            <person name="Dodson R.J."/>
            <person name="Khalak H.G."/>
            <person name="Glodek A."/>
            <person name="McKenney K."/>
            <person name="FitzGerald L.M."/>
            <person name="Lee N."/>
            <person name="Adams M.D."/>
            <person name="Hickey E.K."/>
            <person name="Berg D.E."/>
            <person name="Gocayne J.D."/>
            <person name="Utterback T.R."/>
            <person name="Peterson J.D."/>
            <person name="Kelley J.M."/>
            <person name="Cotton M.D."/>
            <person name="Weidman J.F."/>
            <person name="Fujii C."/>
            <person name="Bowman C."/>
            <person name="Watthey L."/>
            <person name="Wallin E."/>
            <person name="Hayes W.S."/>
            <person name="Borodovsky M."/>
            <person name="Karp P.D."/>
            <person name="Smith H.O."/>
            <person name="Fraser C.M."/>
            <person name="Venter J.C."/>
        </authorList>
    </citation>
    <scope>NUCLEOTIDE SEQUENCE [LARGE SCALE GENOMIC DNA]</scope>
    <source>
        <strain>ATCC 700392 / 26695</strain>
    </source>
</reference>
<organism>
    <name type="scientific">Helicobacter pylori (strain ATCC 700392 / 26695)</name>
    <name type="common">Campylobacter pylori</name>
    <dbReference type="NCBI Taxonomy" id="85962"/>
    <lineage>
        <taxon>Bacteria</taxon>
        <taxon>Pseudomonadati</taxon>
        <taxon>Campylobacterota</taxon>
        <taxon>Epsilonproteobacteria</taxon>
        <taxon>Campylobacterales</taxon>
        <taxon>Helicobacteraceae</taxon>
        <taxon>Helicobacter</taxon>
    </lineage>
</organism>
<protein>
    <recommendedName>
        <fullName evidence="1">Ribosome maturation factor RimP</fullName>
    </recommendedName>
</protein>
<comment type="function">
    <text evidence="1">Required for maturation of 30S ribosomal subunits.</text>
</comment>
<comment type="interaction">
    <interactant intactId="EBI-7605525">
        <id>O25687</id>
    </interactant>
    <interactant intactId="EBI-7607319">
        <id>P0A0X4</id>
        <label>rpsL</label>
    </interactant>
    <organismsDiffer>false</organismsDiffer>
    <experiments>3</experiments>
</comment>
<comment type="subcellular location">
    <subcellularLocation>
        <location evidence="1">Cytoplasm</location>
    </subcellularLocation>
</comment>
<comment type="similarity">
    <text evidence="1">Belongs to the RimP family.</text>
</comment>
<sequence length="146" mass="16543">MTKKIEEKIGGVIESLGYLLYDVSLVKENEQHVLRVSLKNPNGAVSLDICQQVSEIISPLLDVCDFIQDAYILEVSSMGLERTLKTPKHFKLSLGEKVEVKLTNKESFQAVLKDANDLSADFELEDHAIKSVEYKDLKKVKTLFEW</sequence>
<gene>
    <name evidence="1" type="primary">rimP</name>
    <name type="ordered locus">HP_1046</name>
</gene>
<feature type="chain" id="PRO_0000181878" description="Ribosome maturation factor RimP">
    <location>
        <begin position="1"/>
        <end position="146"/>
    </location>
</feature>
<name>RIMP_HELPY</name>
<keyword id="KW-0963">Cytoplasm</keyword>
<keyword id="KW-1185">Reference proteome</keyword>
<keyword id="KW-0690">Ribosome biogenesis</keyword>
<evidence type="ECO:0000255" key="1">
    <source>
        <dbReference type="HAMAP-Rule" id="MF_01077"/>
    </source>
</evidence>